<organism>
    <name type="scientific">Wolbachia pipientis wMel</name>
    <dbReference type="NCBI Taxonomy" id="163164"/>
    <lineage>
        <taxon>Bacteria</taxon>
        <taxon>Pseudomonadati</taxon>
        <taxon>Pseudomonadota</taxon>
        <taxon>Alphaproteobacteria</taxon>
        <taxon>Rickettsiales</taxon>
        <taxon>Anaplasmataceae</taxon>
        <taxon>Wolbachieae</taxon>
        <taxon>Wolbachia</taxon>
    </lineage>
</organism>
<protein>
    <recommendedName>
        <fullName evidence="1">Holo-[acyl-carrier-protein] synthase</fullName>
        <shortName evidence="1">Holo-ACP synthase</shortName>
        <ecNumber evidence="1">2.7.8.7</ecNumber>
    </recommendedName>
    <alternativeName>
        <fullName evidence="1">4'-phosphopantetheinyl transferase AcpS</fullName>
    </alternativeName>
</protein>
<dbReference type="EC" id="2.7.8.7" evidence="1"/>
<dbReference type="EMBL" id="AE017196">
    <property type="protein sequence ID" value="AAS14501.1"/>
    <property type="molecule type" value="Genomic_DNA"/>
</dbReference>
<dbReference type="RefSeq" id="WP_010962851.1">
    <property type="nucleotide sequence ID" value="NZ_JAIUXN010000060.1"/>
</dbReference>
<dbReference type="SMR" id="Q73GW5"/>
<dbReference type="EnsemblBacteria" id="AAS14501">
    <property type="protein sequence ID" value="AAS14501"/>
    <property type="gene ID" value="WD_0814"/>
</dbReference>
<dbReference type="KEGG" id="wol:WD_0814"/>
<dbReference type="eggNOG" id="COG0736">
    <property type="taxonomic scope" value="Bacteria"/>
</dbReference>
<dbReference type="Proteomes" id="UP000008215">
    <property type="component" value="Chromosome"/>
</dbReference>
<dbReference type="GO" id="GO:0005737">
    <property type="term" value="C:cytoplasm"/>
    <property type="evidence" value="ECO:0007669"/>
    <property type="project" value="UniProtKB-SubCell"/>
</dbReference>
<dbReference type="GO" id="GO:0008897">
    <property type="term" value="F:holo-[acyl-carrier-protein] synthase activity"/>
    <property type="evidence" value="ECO:0007669"/>
    <property type="project" value="UniProtKB-UniRule"/>
</dbReference>
<dbReference type="GO" id="GO:0000287">
    <property type="term" value="F:magnesium ion binding"/>
    <property type="evidence" value="ECO:0007669"/>
    <property type="project" value="UniProtKB-UniRule"/>
</dbReference>
<dbReference type="GO" id="GO:0006633">
    <property type="term" value="P:fatty acid biosynthetic process"/>
    <property type="evidence" value="ECO:0007669"/>
    <property type="project" value="UniProtKB-UniRule"/>
</dbReference>
<dbReference type="Gene3D" id="3.90.470.20">
    <property type="entry name" value="4'-phosphopantetheinyl transferase domain"/>
    <property type="match status" value="1"/>
</dbReference>
<dbReference type="HAMAP" id="MF_00101">
    <property type="entry name" value="AcpS"/>
    <property type="match status" value="1"/>
</dbReference>
<dbReference type="InterPro" id="IPR008278">
    <property type="entry name" value="4-PPantetheinyl_Trfase_dom"/>
</dbReference>
<dbReference type="InterPro" id="IPR037143">
    <property type="entry name" value="4-PPantetheinyl_Trfase_dom_sf"/>
</dbReference>
<dbReference type="InterPro" id="IPR002582">
    <property type="entry name" value="ACPS"/>
</dbReference>
<dbReference type="InterPro" id="IPR004568">
    <property type="entry name" value="Ppantetheine-prot_Trfase_dom"/>
</dbReference>
<dbReference type="NCBIfam" id="TIGR00516">
    <property type="entry name" value="acpS"/>
    <property type="match status" value="1"/>
</dbReference>
<dbReference type="NCBIfam" id="TIGR00556">
    <property type="entry name" value="pantethn_trn"/>
    <property type="match status" value="1"/>
</dbReference>
<dbReference type="NCBIfam" id="NF011253">
    <property type="entry name" value="PRK14659.1"/>
    <property type="match status" value="1"/>
</dbReference>
<dbReference type="Pfam" id="PF01648">
    <property type="entry name" value="ACPS"/>
    <property type="match status" value="1"/>
</dbReference>
<dbReference type="SUPFAM" id="SSF56214">
    <property type="entry name" value="4'-phosphopantetheinyl transferase"/>
    <property type="match status" value="1"/>
</dbReference>
<proteinExistence type="inferred from homology"/>
<gene>
    <name evidence="1" type="primary">acpS</name>
    <name type="ordered locus">WD_0814</name>
</gene>
<reference key="1">
    <citation type="journal article" date="2004" name="PLoS Biol.">
        <title>Phylogenomics of the reproductive parasite Wolbachia pipientis wMel: a streamlined genome overrun by mobile genetic elements.</title>
        <authorList>
            <person name="Wu M."/>
            <person name="Sun L.V."/>
            <person name="Vamathevan J.J."/>
            <person name="Riegler M."/>
            <person name="DeBoy R.T."/>
            <person name="Brownlie J.C."/>
            <person name="McGraw E.A."/>
            <person name="Martin W."/>
            <person name="Esser C."/>
            <person name="Ahmadinejad N."/>
            <person name="Wiegand C."/>
            <person name="Madupu R."/>
            <person name="Beanan M.J."/>
            <person name="Brinkac L.M."/>
            <person name="Daugherty S.C."/>
            <person name="Durkin A.S."/>
            <person name="Kolonay J.F."/>
            <person name="Nelson W.C."/>
            <person name="Mohamoud Y."/>
            <person name="Lee P."/>
            <person name="Berry K.J."/>
            <person name="Young M.B."/>
            <person name="Utterback T.R."/>
            <person name="Weidman J.F."/>
            <person name="Nierman W.C."/>
            <person name="Paulsen I.T."/>
            <person name="Nelson K.E."/>
            <person name="Tettelin H."/>
            <person name="O'Neill S.L."/>
            <person name="Eisen J.A."/>
        </authorList>
    </citation>
    <scope>NUCLEOTIDE SEQUENCE [LARGE SCALE GENOMIC DNA]</scope>
</reference>
<feature type="chain" id="PRO_0000175731" description="Holo-[acyl-carrier-protein] synthase">
    <location>
        <begin position="1"/>
        <end position="123"/>
    </location>
</feature>
<feature type="binding site" evidence="1">
    <location>
        <position position="8"/>
    </location>
    <ligand>
        <name>Mg(2+)</name>
        <dbReference type="ChEBI" id="CHEBI:18420"/>
    </ligand>
</feature>
<feature type="binding site" evidence="1">
    <location>
        <position position="60"/>
    </location>
    <ligand>
        <name>Mg(2+)</name>
        <dbReference type="ChEBI" id="CHEBI:18420"/>
    </ligand>
</feature>
<evidence type="ECO:0000255" key="1">
    <source>
        <dbReference type="HAMAP-Rule" id="MF_00101"/>
    </source>
</evidence>
<sequence length="123" mass="14295">MIHSIGTDIVYIPRILRILQKYGEKFLNRIYTEKEIELSRKYNSQEMRARYFAKRFAAKEAFVKARGSGQGITMKDIEIYNDVRGKPYLTVSKDFISKIHLSLSDDGDYATAFVVICVYSSHR</sequence>
<comment type="function">
    <text evidence="1">Transfers the 4'-phosphopantetheine moiety from coenzyme A to a Ser of acyl-carrier-protein.</text>
</comment>
<comment type="catalytic activity">
    <reaction evidence="1">
        <text>apo-[ACP] + CoA = holo-[ACP] + adenosine 3',5'-bisphosphate + H(+)</text>
        <dbReference type="Rhea" id="RHEA:12068"/>
        <dbReference type="Rhea" id="RHEA-COMP:9685"/>
        <dbReference type="Rhea" id="RHEA-COMP:9690"/>
        <dbReference type="ChEBI" id="CHEBI:15378"/>
        <dbReference type="ChEBI" id="CHEBI:29999"/>
        <dbReference type="ChEBI" id="CHEBI:57287"/>
        <dbReference type="ChEBI" id="CHEBI:58343"/>
        <dbReference type="ChEBI" id="CHEBI:64479"/>
        <dbReference type="EC" id="2.7.8.7"/>
    </reaction>
</comment>
<comment type="cofactor">
    <cofactor evidence="1">
        <name>Mg(2+)</name>
        <dbReference type="ChEBI" id="CHEBI:18420"/>
    </cofactor>
</comment>
<comment type="subcellular location">
    <subcellularLocation>
        <location evidence="1">Cytoplasm</location>
    </subcellularLocation>
</comment>
<comment type="similarity">
    <text evidence="1">Belongs to the P-Pant transferase superfamily. AcpS family.</text>
</comment>
<keyword id="KW-0963">Cytoplasm</keyword>
<keyword id="KW-0275">Fatty acid biosynthesis</keyword>
<keyword id="KW-0276">Fatty acid metabolism</keyword>
<keyword id="KW-0444">Lipid biosynthesis</keyword>
<keyword id="KW-0443">Lipid metabolism</keyword>
<keyword id="KW-0460">Magnesium</keyword>
<keyword id="KW-0479">Metal-binding</keyword>
<keyword id="KW-0808">Transferase</keyword>
<name>ACPS_WOLPM</name>
<accession>Q73GW5</accession>